<reference key="1">
    <citation type="submission" date="2003-10" db="EMBL/GenBank/DDBJ databases">
        <title>The complete genome sequence of the alkaliphilic Bacillus clausii KSM-K16.</title>
        <authorList>
            <person name="Takaki Y."/>
            <person name="Kageyama Y."/>
            <person name="Shimamura S."/>
            <person name="Suzuki H."/>
            <person name="Nishi S."/>
            <person name="Hatada Y."/>
            <person name="Kawai S."/>
            <person name="Ito S."/>
            <person name="Horikoshi K."/>
        </authorList>
    </citation>
    <scope>NUCLEOTIDE SEQUENCE [LARGE SCALE GENOMIC DNA]</scope>
    <source>
        <strain>KSM-K16</strain>
    </source>
</reference>
<accession>Q5WDX3</accession>
<comment type="catalytic activity">
    <reaction evidence="1">
        <text>diphosphate + H2O = 2 phosphate + H(+)</text>
        <dbReference type="Rhea" id="RHEA:24576"/>
        <dbReference type="ChEBI" id="CHEBI:15377"/>
        <dbReference type="ChEBI" id="CHEBI:15378"/>
        <dbReference type="ChEBI" id="CHEBI:33019"/>
        <dbReference type="ChEBI" id="CHEBI:43474"/>
        <dbReference type="EC" id="3.6.1.1"/>
    </reaction>
</comment>
<comment type="cofactor">
    <cofactor evidence="1">
        <name>Mn(2+)</name>
        <dbReference type="ChEBI" id="CHEBI:29035"/>
    </cofactor>
    <text evidence="1">Binds 2 manganese ions per subunit.</text>
</comment>
<comment type="subcellular location">
    <subcellularLocation>
        <location evidence="1">Cytoplasm</location>
    </subcellularLocation>
</comment>
<comment type="similarity">
    <text evidence="1">Belongs to the PPase class C family.</text>
</comment>
<organism>
    <name type="scientific">Shouchella clausii (strain KSM-K16)</name>
    <name type="common">Alkalihalobacillus clausii</name>
    <dbReference type="NCBI Taxonomy" id="66692"/>
    <lineage>
        <taxon>Bacteria</taxon>
        <taxon>Bacillati</taxon>
        <taxon>Bacillota</taxon>
        <taxon>Bacilli</taxon>
        <taxon>Bacillales</taxon>
        <taxon>Bacillaceae</taxon>
        <taxon>Shouchella</taxon>
    </lineage>
</organism>
<sequence length="311" mass="33632">MPKTLIFGHKNPDTDTICSAIAYADLKGQLGVETEAVRLGEPNGETLYALEAFGVSTPRLIEKAANETDRVILVDHNERQQSVSDIDDVQVVEVIDHHRIANFETADPVYYRAEPVGCTATIIKKLYKEHGLDIPKPIAGLMLSAIISDSLLFKSPTCTEEDRQAAKELAEIAGVNAEEYGLNMLKAGADISDKTAGELLTMDAKAFAMGAATVEIAQVNTVDINDVLARQSELEKVITAKINDNGLDLFVFIITDILENDSVALVLGDKTAAFEQAFQTTLTNHTAVLKGVVSRKKQVVPPLTEAIANVN</sequence>
<protein>
    <recommendedName>
        <fullName evidence="1">Probable manganese-dependent inorganic pyrophosphatase</fullName>
        <ecNumber evidence="1">3.6.1.1</ecNumber>
    </recommendedName>
    <alternativeName>
        <fullName evidence="1">Pyrophosphate phospho-hydrolase</fullName>
        <shortName evidence="1">PPase</shortName>
    </alternativeName>
</protein>
<dbReference type="EC" id="3.6.1.1" evidence="1"/>
<dbReference type="EMBL" id="AP006627">
    <property type="protein sequence ID" value="BAD65437.1"/>
    <property type="molecule type" value="Genomic_DNA"/>
</dbReference>
<dbReference type="RefSeq" id="WP_011247745.1">
    <property type="nucleotide sequence ID" value="NC_006582.1"/>
</dbReference>
<dbReference type="SMR" id="Q5WDX3"/>
<dbReference type="STRING" id="66692.ABC2903"/>
<dbReference type="KEGG" id="bcl:ABC2903"/>
<dbReference type="eggNOG" id="COG1227">
    <property type="taxonomic scope" value="Bacteria"/>
</dbReference>
<dbReference type="HOGENOM" id="CLU_025243_0_1_9"/>
<dbReference type="OrthoDB" id="9766150at2"/>
<dbReference type="Proteomes" id="UP000001168">
    <property type="component" value="Chromosome"/>
</dbReference>
<dbReference type="GO" id="GO:0005737">
    <property type="term" value="C:cytoplasm"/>
    <property type="evidence" value="ECO:0007669"/>
    <property type="project" value="UniProtKB-SubCell"/>
</dbReference>
<dbReference type="GO" id="GO:0004427">
    <property type="term" value="F:inorganic diphosphate phosphatase activity"/>
    <property type="evidence" value="ECO:0007669"/>
    <property type="project" value="UniProtKB-UniRule"/>
</dbReference>
<dbReference type="GO" id="GO:0030145">
    <property type="term" value="F:manganese ion binding"/>
    <property type="evidence" value="ECO:0007669"/>
    <property type="project" value="UniProtKB-UniRule"/>
</dbReference>
<dbReference type="FunFam" id="3.10.310.20:FF:000001">
    <property type="entry name" value="Probable manganese-dependent inorganic pyrophosphatase"/>
    <property type="match status" value="1"/>
</dbReference>
<dbReference type="FunFam" id="3.90.1640.10:FF:000001">
    <property type="entry name" value="Probable manganese-dependent inorganic pyrophosphatase"/>
    <property type="match status" value="1"/>
</dbReference>
<dbReference type="Gene3D" id="3.10.310.20">
    <property type="entry name" value="DHHA2 domain"/>
    <property type="match status" value="1"/>
</dbReference>
<dbReference type="Gene3D" id="3.90.1640.10">
    <property type="entry name" value="inorganic pyrophosphatase (n-terminal core)"/>
    <property type="match status" value="1"/>
</dbReference>
<dbReference type="HAMAP" id="MF_00207">
    <property type="entry name" value="PPase_C"/>
    <property type="match status" value="1"/>
</dbReference>
<dbReference type="InterPro" id="IPR001667">
    <property type="entry name" value="DDH_dom"/>
</dbReference>
<dbReference type="InterPro" id="IPR038763">
    <property type="entry name" value="DHH_sf"/>
</dbReference>
<dbReference type="InterPro" id="IPR004097">
    <property type="entry name" value="DHHA2"/>
</dbReference>
<dbReference type="InterPro" id="IPR038222">
    <property type="entry name" value="DHHA2_dom_sf"/>
</dbReference>
<dbReference type="InterPro" id="IPR022934">
    <property type="entry name" value="Mn-dep_inorganic_PyrPase"/>
</dbReference>
<dbReference type="NCBIfam" id="NF003877">
    <property type="entry name" value="PRK05427.1"/>
    <property type="match status" value="1"/>
</dbReference>
<dbReference type="PANTHER" id="PTHR12112">
    <property type="entry name" value="BNIP - RELATED"/>
    <property type="match status" value="1"/>
</dbReference>
<dbReference type="PANTHER" id="PTHR12112:SF22">
    <property type="entry name" value="MANGANESE-DEPENDENT INORGANIC PYROPHOSPHATASE-RELATED"/>
    <property type="match status" value="1"/>
</dbReference>
<dbReference type="Pfam" id="PF01368">
    <property type="entry name" value="DHH"/>
    <property type="match status" value="1"/>
</dbReference>
<dbReference type="Pfam" id="PF02833">
    <property type="entry name" value="DHHA2"/>
    <property type="match status" value="1"/>
</dbReference>
<dbReference type="SMART" id="SM01131">
    <property type="entry name" value="DHHA2"/>
    <property type="match status" value="1"/>
</dbReference>
<dbReference type="SUPFAM" id="SSF64182">
    <property type="entry name" value="DHH phosphoesterases"/>
    <property type="match status" value="1"/>
</dbReference>
<name>PPAC_SHOC1</name>
<evidence type="ECO:0000255" key="1">
    <source>
        <dbReference type="HAMAP-Rule" id="MF_00207"/>
    </source>
</evidence>
<keyword id="KW-0963">Cytoplasm</keyword>
<keyword id="KW-0378">Hydrolase</keyword>
<keyword id="KW-0464">Manganese</keyword>
<keyword id="KW-0479">Metal-binding</keyword>
<keyword id="KW-1185">Reference proteome</keyword>
<feature type="chain" id="PRO_1000012311" description="Probable manganese-dependent inorganic pyrophosphatase">
    <location>
        <begin position="1"/>
        <end position="311"/>
    </location>
</feature>
<feature type="binding site" evidence="1">
    <location>
        <position position="9"/>
    </location>
    <ligand>
        <name>Mn(2+)</name>
        <dbReference type="ChEBI" id="CHEBI:29035"/>
        <label>1</label>
    </ligand>
</feature>
<feature type="binding site" evidence="1">
    <location>
        <position position="13"/>
    </location>
    <ligand>
        <name>Mn(2+)</name>
        <dbReference type="ChEBI" id="CHEBI:29035"/>
        <label>1</label>
    </ligand>
</feature>
<feature type="binding site" evidence="1">
    <location>
        <position position="15"/>
    </location>
    <ligand>
        <name>Mn(2+)</name>
        <dbReference type="ChEBI" id="CHEBI:29035"/>
        <label>2</label>
    </ligand>
</feature>
<feature type="binding site" evidence="1">
    <location>
        <position position="75"/>
    </location>
    <ligand>
        <name>Mn(2+)</name>
        <dbReference type="ChEBI" id="CHEBI:29035"/>
        <label>1</label>
    </ligand>
</feature>
<feature type="binding site" evidence="1">
    <location>
        <position position="75"/>
    </location>
    <ligand>
        <name>Mn(2+)</name>
        <dbReference type="ChEBI" id="CHEBI:29035"/>
        <label>2</label>
    </ligand>
</feature>
<feature type="binding site" evidence="1">
    <location>
        <position position="97"/>
    </location>
    <ligand>
        <name>Mn(2+)</name>
        <dbReference type="ChEBI" id="CHEBI:29035"/>
        <label>2</label>
    </ligand>
</feature>
<feature type="binding site" evidence="1">
    <location>
        <position position="149"/>
    </location>
    <ligand>
        <name>Mn(2+)</name>
        <dbReference type="ChEBI" id="CHEBI:29035"/>
        <label>2</label>
    </ligand>
</feature>
<proteinExistence type="inferred from homology"/>
<gene>
    <name evidence="1" type="primary">ppaC</name>
    <name type="ordered locus">ABC2903</name>
</gene>